<keyword id="KW-0028">Amino-acid biosynthesis</keyword>
<keyword id="KW-0057">Aromatic amino acid biosynthesis</keyword>
<keyword id="KW-0413">Isomerase</keyword>
<keyword id="KW-0822">Tryptophan biosynthesis</keyword>
<evidence type="ECO:0000255" key="1">
    <source>
        <dbReference type="HAMAP-Rule" id="MF_00135"/>
    </source>
</evidence>
<accession>B4S715</accession>
<dbReference type="EC" id="5.3.1.24" evidence="1"/>
<dbReference type="EMBL" id="CP001108">
    <property type="protein sequence ID" value="ACF45852.1"/>
    <property type="molecule type" value="Genomic_DNA"/>
</dbReference>
<dbReference type="RefSeq" id="WP_012505389.1">
    <property type="nucleotide sequence ID" value="NC_011059.1"/>
</dbReference>
<dbReference type="SMR" id="B4S715"/>
<dbReference type="STRING" id="290512.Paes_0806"/>
<dbReference type="KEGG" id="paa:Paes_0806"/>
<dbReference type="eggNOG" id="COG0135">
    <property type="taxonomic scope" value="Bacteria"/>
</dbReference>
<dbReference type="HOGENOM" id="CLU_076364_2_0_10"/>
<dbReference type="UniPathway" id="UPA00035">
    <property type="reaction ID" value="UER00042"/>
</dbReference>
<dbReference type="Proteomes" id="UP000002725">
    <property type="component" value="Chromosome"/>
</dbReference>
<dbReference type="GO" id="GO:0004640">
    <property type="term" value="F:phosphoribosylanthranilate isomerase activity"/>
    <property type="evidence" value="ECO:0007669"/>
    <property type="project" value="UniProtKB-UniRule"/>
</dbReference>
<dbReference type="GO" id="GO:0000162">
    <property type="term" value="P:L-tryptophan biosynthetic process"/>
    <property type="evidence" value="ECO:0007669"/>
    <property type="project" value="UniProtKB-UniRule"/>
</dbReference>
<dbReference type="CDD" id="cd00405">
    <property type="entry name" value="PRAI"/>
    <property type="match status" value="1"/>
</dbReference>
<dbReference type="Gene3D" id="3.20.20.70">
    <property type="entry name" value="Aldolase class I"/>
    <property type="match status" value="1"/>
</dbReference>
<dbReference type="HAMAP" id="MF_00135">
    <property type="entry name" value="PRAI"/>
    <property type="match status" value="1"/>
</dbReference>
<dbReference type="InterPro" id="IPR013785">
    <property type="entry name" value="Aldolase_TIM"/>
</dbReference>
<dbReference type="InterPro" id="IPR001240">
    <property type="entry name" value="PRAI_dom"/>
</dbReference>
<dbReference type="InterPro" id="IPR011060">
    <property type="entry name" value="RibuloseP-bd_barrel"/>
</dbReference>
<dbReference type="InterPro" id="IPR044643">
    <property type="entry name" value="TrpF_fam"/>
</dbReference>
<dbReference type="PANTHER" id="PTHR42894">
    <property type="entry name" value="N-(5'-PHOSPHORIBOSYL)ANTHRANILATE ISOMERASE"/>
    <property type="match status" value="1"/>
</dbReference>
<dbReference type="PANTHER" id="PTHR42894:SF1">
    <property type="entry name" value="N-(5'-PHOSPHORIBOSYL)ANTHRANILATE ISOMERASE"/>
    <property type="match status" value="1"/>
</dbReference>
<dbReference type="Pfam" id="PF00697">
    <property type="entry name" value="PRAI"/>
    <property type="match status" value="1"/>
</dbReference>
<dbReference type="SUPFAM" id="SSF51366">
    <property type="entry name" value="Ribulose-phoshate binding barrel"/>
    <property type="match status" value="1"/>
</dbReference>
<proteinExistence type="inferred from homology"/>
<reference key="1">
    <citation type="submission" date="2008-06" db="EMBL/GenBank/DDBJ databases">
        <title>Complete sequence of chromosome of Prosthecochloris aestuarii DSM 271.</title>
        <authorList>
            <consortium name="US DOE Joint Genome Institute"/>
            <person name="Lucas S."/>
            <person name="Copeland A."/>
            <person name="Lapidus A."/>
            <person name="Glavina del Rio T."/>
            <person name="Dalin E."/>
            <person name="Tice H."/>
            <person name="Bruce D."/>
            <person name="Goodwin L."/>
            <person name="Pitluck S."/>
            <person name="Schmutz J."/>
            <person name="Larimer F."/>
            <person name="Land M."/>
            <person name="Hauser L."/>
            <person name="Kyrpides N."/>
            <person name="Anderson I."/>
            <person name="Liu Z."/>
            <person name="Li T."/>
            <person name="Zhao F."/>
            <person name="Overmann J."/>
            <person name="Bryant D.A."/>
            <person name="Richardson P."/>
        </authorList>
    </citation>
    <scope>NUCLEOTIDE SEQUENCE [LARGE SCALE GENOMIC DNA]</scope>
    <source>
        <strain>DSM 271 / SK 413</strain>
    </source>
</reference>
<protein>
    <recommendedName>
        <fullName evidence="1">N-(5'-phosphoribosyl)anthranilate isomerase</fullName>
        <shortName evidence="1">PRAI</shortName>
        <ecNumber evidence="1">5.3.1.24</ecNumber>
    </recommendedName>
</protein>
<comment type="catalytic activity">
    <reaction evidence="1">
        <text>N-(5-phospho-beta-D-ribosyl)anthranilate = 1-(2-carboxyphenylamino)-1-deoxy-D-ribulose 5-phosphate</text>
        <dbReference type="Rhea" id="RHEA:21540"/>
        <dbReference type="ChEBI" id="CHEBI:18277"/>
        <dbReference type="ChEBI" id="CHEBI:58613"/>
        <dbReference type="EC" id="5.3.1.24"/>
    </reaction>
</comment>
<comment type="pathway">
    <text evidence="1">Amino-acid biosynthesis; L-tryptophan biosynthesis; L-tryptophan from chorismate: step 3/5.</text>
</comment>
<comment type="similarity">
    <text evidence="1">Belongs to the TrpF family.</text>
</comment>
<feature type="chain" id="PRO_1000095931" description="N-(5'-phosphoribosyl)anthranilate isomerase">
    <location>
        <begin position="1"/>
        <end position="222"/>
    </location>
</feature>
<organism>
    <name type="scientific">Prosthecochloris aestuarii (strain DSM 271 / SK 413)</name>
    <dbReference type="NCBI Taxonomy" id="290512"/>
    <lineage>
        <taxon>Bacteria</taxon>
        <taxon>Pseudomonadati</taxon>
        <taxon>Chlorobiota</taxon>
        <taxon>Chlorobiia</taxon>
        <taxon>Chlorobiales</taxon>
        <taxon>Chlorobiaceae</taxon>
        <taxon>Prosthecochloris</taxon>
    </lineage>
</organism>
<name>TRPF_PROA2</name>
<gene>
    <name evidence="1" type="primary">trpF</name>
    <name type="ordered locus">Paes_0806</name>
</gene>
<sequence length="222" mass="23597">MTRIKICGITTLEDALAAVEAGAHALGFNFSTTSPRAVTPQTARSIISAIPPFITTTGIFVEQSPDEINSICERCNLHCAQLHSEAYDAQSSLAVSAPSIIRVFRAGPSFHMDQVRSYAGKTGIRNFLFDAFREGQPGGTGESIEDTTAIRIFKETASIGSAILAGGLKPENVGRAIRLVSPYAVDTASGVESVPGRKDHDKIRAFVRAVQEADNDSSSPEA</sequence>